<accession>Q1CEL3</accession>
<accession>C4GXU7</accession>
<dbReference type="EMBL" id="CP000305">
    <property type="protein sequence ID" value="ABG19567.1"/>
    <property type="molecule type" value="Genomic_DNA"/>
</dbReference>
<dbReference type="EMBL" id="ACNQ01000017">
    <property type="protein sequence ID" value="EEO75747.1"/>
    <property type="molecule type" value="Genomic_DNA"/>
</dbReference>
<dbReference type="RefSeq" id="WP_002223151.1">
    <property type="nucleotide sequence ID" value="NZ_ACNQ01000017.1"/>
</dbReference>
<dbReference type="SMR" id="Q1CEL3"/>
<dbReference type="GeneID" id="49787518"/>
<dbReference type="KEGG" id="ypn:YPN_3240"/>
<dbReference type="HOGENOM" id="CLU_006301_6_3_6"/>
<dbReference type="Proteomes" id="UP000008936">
    <property type="component" value="Chromosome"/>
</dbReference>
<dbReference type="GO" id="GO:0005829">
    <property type="term" value="C:cytosol"/>
    <property type="evidence" value="ECO:0007669"/>
    <property type="project" value="TreeGrafter"/>
</dbReference>
<dbReference type="GO" id="GO:0005525">
    <property type="term" value="F:GTP binding"/>
    <property type="evidence" value="ECO:0007669"/>
    <property type="project" value="UniProtKB-KW"/>
</dbReference>
<dbReference type="GO" id="GO:0003924">
    <property type="term" value="F:GTPase activity"/>
    <property type="evidence" value="ECO:0007669"/>
    <property type="project" value="UniProtKB-UniRule"/>
</dbReference>
<dbReference type="GO" id="GO:0097216">
    <property type="term" value="F:guanosine tetraphosphate binding"/>
    <property type="evidence" value="ECO:0007669"/>
    <property type="project" value="UniProtKB-ARBA"/>
</dbReference>
<dbReference type="GO" id="GO:0003743">
    <property type="term" value="F:translation initiation factor activity"/>
    <property type="evidence" value="ECO:0007669"/>
    <property type="project" value="UniProtKB-UniRule"/>
</dbReference>
<dbReference type="CDD" id="cd01887">
    <property type="entry name" value="IF2_eIF5B"/>
    <property type="match status" value="1"/>
</dbReference>
<dbReference type="CDD" id="cd03702">
    <property type="entry name" value="IF2_mtIF2_II"/>
    <property type="match status" value="1"/>
</dbReference>
<dbReference type="CDD" id="cd03692">
    <property type="entry name" value="mtIF2_IVc"/>
    <property type="match status" value="1"/>
</dbReference>
<dbReference type="FunFam" id="2.40.30.10:FF:000007">
    <property type="entry name" value="Translation initiation factor IF-2"/>
    <property type="match status" value="1"/>
</dbReference>
<dbReference type="FunFam" id="2.40.30.10:FF:000008">
    <property type="entry name" value="Translation initiation factor IF-2"/>
    <property type="match status" value="1"/>
</dbReference>
<dbReference type="FunFam" id="3.30.56.50:FF:000001">
    <property type="entry name" value="Translation initiation factor IF-2"/>
    <property type="match status" value="1"/>
</dbReference>
<dbReference type="FunFam" id="3.40.50.10050:FF:000001">
    <property type="entry name" value="Translation initiation factor IF-2"/>
    <property type="match status" value="1"/>
</dbReference>
<dbReference type="FunFam" id="3.40.50.300:FF:000019">
    <property type="entry name" value="Translation initiation factor IF-2"/>
    <property type="match status" value="1"/>
</dbReference>
<dbReference type="Gene3D" id="3.40.50.300">
    <property type="entry name" value="P-loop containing nucleotide triphosphate hydrolases"/>
    <property type="match status" value="1"/>
</dbReference>
<dbReference type="Gene3D" id="3.30.56.50">
    <property type="entry name" value="Putative DNA-binding domain, N-terminal subdomain of bacterial translation initiation factor IF2"/>
    <property type="match status" value="1"/>
</dbReference>
<dbReference type="Gene3D" id="2.40.30.10">
    <property type="entry name" value="Translation factors"/>
    <property type="match status" value="2"/>
</dbReference>
<dbReference type="Gene3D" id="3.40.50.10050">
    <property type="entry name" value="Translation initiation factor IF- 2, domain 3"/>
    <property type="match status" value="1"/>
</dbReference>
<dbReference type="HAMAP" id="MF_00100_B">
    <property type="entry name" value="IF_2_B"/>
    <property type="match status" value="1"/>
</dbReference>
<dbReference type="InterPro" id="IPR009061">
    <property type="entry name" value="DNA-bd_dom_put_sf"/>
</dbReference>
<dbReference type="InterPro" id="IPR053905">
    <property type="entry name" value="EF-G-like_DII"/>
</dbReference>
<dbReference type="InterPro" id="IPR004161">
    <property type="entry name" value="EFTu-like_2"/>
</dbReference>
<dbReference type="InterPro" id="IPR013575">
    <property type="entry name" value="IF2_assoc_dom_bac"/>
</dbReference>
<dbReference type="InterPro" id="IPR044145">
    <property type="entry name" value="IF2_II"/>
</dbReference>
<dbReference type="InterPro" id="IPR006847">
    <property type="entry name" value="IF2_N"/>
</dbReference>
<dbReference type="InterPro" id="IPR027417">
    <property type="entry name" value="P-loop_NTPase"/>
</dbReference>
<dbReference type="InterPro" id="IPR005225">
    <property type="entry name" value="Small_GTP-bd"/>
</dbReference>
<dbReference type="InterPro" id="IPR000795">
    <property type="entry name" value="T_Tr_GTP-bd_dom"/>
</dbReference>
<dbReference type="InterPro" id="IPR000178">
    <property type="entry name" value="TF_IF2_bacterial-like"/>
</dbReference>
<dbReference type="InterPro" id="IPR015760">
    <property type="entry name" value="TIF_IF2"/>
</dbReference>
<dbReference type="InterPro" id="IPR023115">
    <property type="entry name" value="TIF_IF2_dom3"/>
</dbReference>
<dbReference type="InterPro" id="IPR036925">
    <property type="entry name" value="TIF_IF2_dom3_sf"/>
</dbReference>
<dbReference type="InterPro" id="IPR009000">
    <property type="entry name" value="Transl_B-barrel_sf"/>
</dbReference>
<dbReference type="NCBIfam" id="TIGR00487">
    <property type="entry name" value="IF-2"/>
    <property type="match status" value="1"/>
</dbReference>
<dbReference type="NCBIfam" id="TIGR00231">
    <property type="entry name" value="small_GTP"/>
    <property type="match status" value="1"/>
</dbReference>
<dbReference type="PANTHER" id="PTHR43381:SF5">
    <property type="entry name" value="TR-TYPE G DOMAIN-CONTAINING PROTEIN"/>
    <property type="match status" value="1"/>
</dbReference>
<dbReference type="PANTHER" id="PTHR43381">
    <property type="entry name" value="TRANSLATION INITIATION FACTOR IF-2-RELATED"/>
    <property type="match status" value="1"/>
</dbReference>
<dbReference type="Pfam" id="PF22042">
    <property type="entry name" value="EF-G_D2"/>
    <property type="match status" value="1"/>
</dbReference>
<dbReference type="Pfam" id="PF00009">
    <property type="entry name" value="GTP_EFTU"/>
    <property type="match status" value="1"/>
</dbReference>
<dbReference type="Pfam" id="PF03144">
    <property type="entry name" value="GTP_EFTU_D2"/>
    <property type="match status" value="1"/>
</dbReference>
<dbReference type="Pfam" id="PF11987">
    <property type="entry name" value="IF-2"/>
    <property type="match status" value="1"/>
</dbReference>
<dbReference type="Pfam" id="PF08364">
    <property type="entry name" value="IF2_assoc"/>
    <property type="match status" value="1"/>
</dbReference>
<dbReference type="Pfam" id="PF04760">
    <property type="entry name" value="IF2_N"/>
    <property type="match status" value="2"/>
</dbReference>
<dbReference type="SUPFAM" id="SSF52156">
    <property type="entry name" value="Initiation factor IF2/eIF5b, domain 3"/>
    <property type="match status" value="1"/>
</dbReference>
<dbReference type="SUPFAM" id="SSF52540">
    <property type="entry name" value="P-loop containing nucleoside triphosphate hydrolases"/>
    <property type="match status" value="1"/>
</dbReference>
<dbReference type="SUPFAM" id="SSF46955">
    <property type="entry name" value="Putative DNA-binding domain"/>
    <property type="match status" value="1"/>
</dbReference>
<dbReference type="SUPFAM" id="SSF50447">
    <property type="entry name" value="Translation proteins"/>
    <property type="match status" value="2"/>
</dbReference>
<dbReference type="PROSITE" id="PS51722">
    <property type="entry name" value="G_TR_2"/>
    <property type="match status" value="1"/>
</dbReference>
<dbReference type="PROSITE" id="PS01176">
    <property type="entry name" value="IF2"/>
    <property type="match status" value="1"/>
</dbReference>
<protein>
    <recommendedName>
        <fullName evidence="2">Translation initiation factor IF-2</fullName>
    </recommendedName>
</protein>
<comment type="function">
    <text evidence="2">One of the essential components for the initiation of protein synthesis. Protects formylmethionyl-tRNA from spontaneous hydrolysis and promotes its binding to the 30S ribosomal subunits. Also involved in the hydrolysis of GTP during the formation of the 70S ribosomal complex.</text>
</comment>
<comment type="subcellular location">
    <subcellularLocation>
        <location evidence="2">Cytoplasm</location>
    </subcellularLocation>
</comment>
<comment type="similarity">
    <text evidence="2">Belongs to the TRAFAC class translation factor GTPase superfamily. Classic translation factor GTPase family. IF-2 subfamily.</text>
</comment>
<keyword id="KW-0963">Cytoplasm</keyword>
<keyword id="KW-0342">GTP-binding</keyword>
<keyword id="KW-0396">Initiation factor</keyword>
<keyword id="KW-0547">Nucleotide-binding</keyword>
<keyword id="KW-0648">Protein biosynthesis</keyword>
<gene>
    <name evidence="2" type="primary">infB</name>
    <name type="ordered locus">YPN_3240</name>
    <name type="ORF">YP516_3680</name>
</gene>
<name>IF2_YERPN</name>
<proteinExistence type="inferred from homology"/>
<evidence type="ECO:0000250" key="1"/>
<evidence type="ECO:0000255" key="2">
    <source>
        <dbReference type="HAMAP-Rule" id="MF_00100"/>
    </source>
</evidence>
<evidence type="ECO:0000256" key="3">
    <source>
        <dbReference type="SAM" id="MobiDB-lite"/>
    </source>
</evidence>
<organism>
    <name type="scientific">Yersinia pestis bv. Antiqua (strain Nepal516)</name>
    <dbReference type="NCBI Taxonomy" id="377628"/>
    <lineage>
        <taxon>Bacteria</taxon>
        <taxon>Pseudomonadati</taxon>
        <taxon>Pseudomonadota</taxon>
        <taxon>Gammaproteobacteria</taxon>
        <taxon>Enterobacterales</taxon>
        <taxon>Yersiniaceae</taxon>
        <taxon>Yersinia</taxon>
    </lineage>
</organism>
<sequence length="892" mass="97567">MTDVTVKSLAAEIQTPVDRLVQQFADAGIKKSDVDSVTQQEKEILLAHLNREHGSVPNKLTLQRKTRSTLNIPSTGGKSKSVQIEVRKKRTYVNTPEAEQAKAEEQAQREAEEQAQREAEATAQKIAEEKAKREAEEQAKREAAEKAKRQAAEKEKVTNQQTDEKTKPAQTDKARREAEAAELKRSVEEETRRKVEEDAKRVAEEARKMAAENEGKWPEPVAEQTESADYHVTTSQHARAAEDENDAKVEGDRRSRTRGGKATKQKKGNKLSESKADREEARAVGRKGKRKPSTLQQSFNKPVVAVNRDVVIGETVTVAELANKMAVKGSQVIKAMMKLGAMATINQVIDQETAQLVAEEMGHKVILRRENELEEALMSDRDIGVEAAAEHRAPVVTIMGHVDHGKTSLLDYIRSTKVASGEAGGITQHIGAYHVETENGMITFLDTPGHAAFTSMRARGAQATDIVVLVVAADDGVMPQTIEAIQHAKAANVPVVVAVNKIDKPEADPDRVKTELSQYGIQPEEWGGESQFINVSAKAGIGIDELLNAILLQAEVLELKAVRTGMANGVVIESFLDKGRGPVATVLVQQGTLNKGDIVLCGFEYGRVRAMRDELGRDITSAGPSIPVEILGLSSVPAAGDEVTVVRDEKKAREVALYRQGKFREVKLARQQKSKLENMFANMTEGEVSELNIVIKSDVQGSCEAICDSLEKLSTDEVKVRIVGSGVGGITETDATLAAASGAIILGFNVRADASARRVVETEGLDLRYYSVIYSLIDEVKQAMSGMLAPEYKQQIIGLAEVRDVFKSPKFGAIAGCMVTEGVIKRNNPIRVLRDNVVIYEGELESLRRFKDDVSEVRNGMECGIGVKNYNDVRTGDVIEVFEIIEIKRTIA</sequence>
<reference key="1">
    <citation type="journal article" date="2006" name="J. Bacteriol.">
        <title>Complete genome sequence of Yersinia pestis strains Antiqua and Nepal516: evidence of gene reduction in an emerging pathogen.</title>
        <authorList>
            <person name="Chain P.S.G."/>
            <person name="Hu P."/>
            <person name="Malfatti S.A."/>
            <person name="Radnedge L."/>
            <person name="Larimer F."/>
            <person name="Vergez L.M."/>
            <person name="Worsham P."/>
            <person name="Chu M.C."/>
            <person name="Andersen G.L."/>
        </authorList>
    </citation>
    <scope>NUCLEOTIDE SEQUENCE [LARGE SCALE GENOMIC DNA]</scope>
    <source>
        <strain>Nepal516</strain>
    </source>
</reference>
<reference key="2">
    <citation type="submission" date="2009-04" db="EMBL/GenBank/DDBJ databases">
        <title>Yersinia pestis Nepal516A whole genome shotgun sequencing project.</title>
        <authorList>
            <person name="Plunkett G. III"/>
            <person name="Anderson B.D."/>
            <person name="Baumler D.J."/>
            <person name="Burland V."/>
            <person name="Cabot E.L."/>
            <person name="Glasner J.D."/>
            <person name="Mau B."/>
            <person name="Neeno-Eckwall E."/>
            <person name="Perna N.T."/>
            <person name="Munk A.C."/>
            <person name="Tapia R."/>
            <person name="Green L.D."/>
            <person name="Rogers Y.C."/>
            <person name="Detter J.C."/>
            <person name="Bruce D.C."/>
            <person name="Brettin T.S."/>
        </authorList>
    </citation>
    <scope>NUCLEOTIDE SEQUENCE [LARGE SCALE GENOMIC DNA]</scope>
    <source>
        <strain>Nepal516</strain>
    </source>
</reference>
<feature type="chain" id="PRO_1000008374" description="Translation initiation factor IF-2">
    <location>
        <begin position="1"/>
        <end position="892"/>
    </location>
</feature>
<feature type="domain" description="tr-type G">
    <location>
        <begin position="391"/>
        <end position="560"/>
    </location>
</feature>
<feature type="region of interest" description="Disordered" evidence="3">
    <location>
        <begin position="65"/>
        <end position="296"/>
    </location>
</feature>
<feature type="region of interest" description="G1" evidence="1">
    <location>
        <begin position="400"/>
        <end position="407"/>
    </location>
</feature>
<feature type="region of interest" description="G2" evidence="1">
    <location>
        <begin position="425"/>
        <end position="429"/>
    </location>
</feature>
<feature type="region of interest" description="G3" evidence="1">
    <location>
        <begin position="446"/>
        <end position="449"/>
    </location>
</feature>
<feature type="region of interest" description="G4" evidence="1">
    <location>
        <begin position="500"/>
        <end position="503"/>
    </location>
</feature>
<feature type="region of interest" description="G5" evidence="1">
    <location>
        <begin position="536"/>
        <end position="538"/>
    </location>
</feature>
<feature type="compositionally biased region" description="Polar residues" evidence="3">
    <location>
        <begin position="68"/>
        <end position="82"/>
    </location>
</feature>
<feature type="compositionally biased region" description="Basic and acidic residues" evidence="3">
    <location>
        <begin position="99"/>
        <end position="217"/>
    </location>
</feature>
<feature type="compositionally biased region" description="Polar residues" evidence="3">
    <location>
        <begin position="224"/>
        <end position="237"/>
    </location>
</feature>
<feature type="compositionally biased region" description="Basic and acidic residues" evidence="3">
    <location>
        <begin position="239"/>
        <end position="254"/>
    </location>
</feature>
<feature type="compositionally biased region" description="Basic residues" evidence="3">
    <location>
        <begin position="255"/>
        <end position="269"/>
    </location>
</feature>
<feature type="compositionally biased region" description="Basic and acidic residues" evidence="3">
    <location>
        <begin position="270"/>
        <end position="283"/>
    </location>
</feature>
<feature type="binding site" evidence="2">
    <location>
        <begin position="400"/>
        <end position="407"/>
    </location>
    <ligand>
        <name>GTP</name>
        <dbReference type="ChEBI" id="CHEBI:37565"/>
    </ligand>
</feature>
<feature type="binding site" evidence="2">
    <location>
        <begin position="446"/>
        <end position="450"/>
    </location>
    <ligand>
        <name>GTP</name>
        <dbReference type="ChEBI" id="CHEBI:37565"/>
    </ligand>
</feature>
<feature type="binding site" evidence="2">
    <location>
        <begin position="500"/>
        <end position="503"/>
    </location>
    <ligand>
        <name>GTP</name>
        <dbReference type="ChEBI" id="CHEBI:37565"/>
    </ligand>
</feature>